<keyword id="KW-0945">Host-virus interaction</keyword>
<keyword id="KW-1090">Inhibition of host innate immune response by virus</keyword>
<keyword id="KW-0922">Interferon antiviral system evasion</keyword>
<keyword id="KW-0732">Signal</keyword>
<keyword id="KW-0899">Viral immunoevasion</keyword>
<accession>P30238</accession>
<evidence type="ECO:0000250" key="1">
    <source>
        <dbReference type="UniProtKB" id="P30237"/>
    </source>
</evidence>
<evidence type="ECO:0000255" key="2"/>
<organism>
    <name type="scientific">Avian infectious bronchitis virus (strain Portugal/322/82)</name>
    <name type="common">IBV</name>
    <dbReference type="NCBI Taxonomy" id="31625"/>
    <lineage>
        <taxon>Viruses</taxon>
        <taxon>Riboviria</taxon>
        <taxon>Orthornavirae</taxon>
        <taxon>Pisuviricota</taxon>
        <taxon>Pisoniviricetes</taxon>
        <taxon>Nidovirales</taxon>
        <taxon>Cornidovirineae</taxon>
        <taxon>Coronaviridae</taxon>
        <taxon>Orthocoronavirinae</taxon>
        <taxon>Gammacoronavirus</taxon>
        <taxon>Igacovirus</taxon>
        <taxon>Avian coronavirus</taxon>
    </lineage>
</organism>
<sequence length="57" mass="6588">MIQSPTSFLIVLILLWCKLVLSCFIECLVALQQLIHVLLQIINSNLQSRLLLWHSLD</sequence>
<dbReference type="EMBL" id="X59819">
    <property type="protein sequence ID" value="CAA42487.1"/>
    <property type="molecule type" value="Genomic_RNA"/>
</dbReference>
<dbReference type="PIR" id="G41038">
    <property type="entry name" value="WMIHB7"/>
</dbReference>
<dbReference type="SMR" id="P30238"/>
<dbReference type="GO" id="GO:0052170">
    <property type="term" value="P:symbiont-mediated suppression of host innate immune response"/>
    <property type="evidence" value="ECO:0007669"/>
    <property type="project" value="UniProtKB-KW"/>
</dbReference>
<dbReference type="InterPro" id="IPR005214">
    <property type="entry name" value="IBV_3A"/>
</dbReference>
<dbReference type="Pfam" id="PF03617">
    <property type="entry name" value="IBV_3A"/>
    <property type="match status" value="1"/>
</dbReference>
<proteinExistence type="inferred from homology"/>
<protein>
    <recommendedName>
        <fullName>Non-structural protein 3a</fullName>
        <shortName>ns3a</shortName>
    </recommendedName>
    <alternativeName>
        <fullName>Accessory protein 3a</fullName>
    </alternativeName>
</protein>
<comment type="function">
    <text evidence="1">Involved in resistance to IFN.</text>
</comment>
<feature type="signal peptide" evidence="2">
    <location>
        <begin position="1"/>
        <end position="22"/>
    </location>
</feature>
<feature type="chain" id="PRO_0000106110" description="Non-structural protein 3a">
    <location>
        <begin position="23"/>
        <end position="57"/>
    </location>
</feature>
<gene>
    <name type="ORF">3a</name>
</gene>
<reference key="1">
    <citation type="journal article" date="1991" name="Virology">
        <title>A polycistronic mRNA specified by the coronavirus infectious bronchitis virus.</title>
        <authorList>
            <person name="Liu D.X."/>
            <person name="Cavanagh D."/>
            <person name="Green P."/>
            <person name="Inglis S.C."/>
        </authorList>
    </citation>
    <scope>NUCLEOTIDE SEQUENCE [GENOMIC RNA]</scope>
</reference>
<name>NS3A_IBVP3</name>
<organismHost>
    <name type="scientific">Gallus gallus</name>
    <name type="common">Chicken</name>
    <dbReference type="NCBI Taxonomy" id="9031"/>
</organismHost>